<dbReference type="EC" id="6.1.1.14" evidence="1"/>
<dbReference type="EMBL" id="AE015451">
    <property type="protein sequence ID" value="AAN65694.1"/>
    <property type="molecule type" value="Genomic_DNA"/>
</dbReference>
<dbReference type="RefSeq" id="NP_742230.1">
    <property type="nucleotide sequence ID" value="NC_002947.4"/>
</dbReference>
<dbReference type="RefSeq" id="WP_010951468.1">
    <property type="nucleotide sequence ID" value="NZ_CP169744.1"/>
</dbReference>
<dbReference type="SMR" id="Q88RR9"/>
<dbReference type="STRING" id="160488.PP_0060"/>
<dbReference type="PaxDb" id="160488-PP_0060"/>
<dbReference type="GeneID" id="83677304"/>
<dbReference type="KEGG" id="ppu:PP_0060"/>
<dbReference type="PATRIC" id="fig|160488.4.peg.65"/>
<dbReference type="eggNOG" id="COG0751">
    <property type="taxonomic scope" value="Bacteria"/>
</dbReference>
<dbReference type="HOGENOM" id="CLU_007220_2_2_6"/>
<dbReference type="OrthoDB" id="9775440at2"/>
<dbReference type="PhylomeDB" id="Q88RR9"/>
<dbReference type="BioCyc" id="PPUT160488:G1G01-63-MONOMER"/>
<dbReference type="Proteomes" id="UP000000556">
    <property type="component" value="Chromosome"/>
</dbReference>
<dbReference type="GO" id="GO:0005829">
    <property type="term" value="C:cytosol"/>
    <property type="evidence" value="ECO:0007669"/>
    <property type="project" value="TreeGrafter"/>
</dbReference>
<dbReference type="GO" id="GO:0004814">
    <property type="term" value="F:arginine-tRNA ligase activity"/>
    <property type="evidence" value="ECO:0007669"/>
    <property type="project" value="InterPro"/>
</dbReference>
<dbReference type="GO" id="GO:0005524">
    <property type="term" value="F:ATP binding"/>
    <property type="evidence" value="ECO:0007669"/>
    <property type="project" value="UniProtKB-UniRule"/>
</dbReference>
<dbReference type="GO" id="GO:0004820">
    <property type="term" value="F:glycine-tRNA ligase activity"/>
    <property type="evidence" value="ECO:0007669"/>
    <property type="project" value="UniProtKB-UniRule"/>
</dbReference>
<dbReference type="GO" id="GO:0006420">
    <property type="term" value="P:arginyl-tRNA aminoacylation"/>
    <property type="evidence" value="ECO:0007669"/>
    <property type="project" value="InterPro"/>
</dbReference>
<dbReference type="GO" id="GO:0006426">
    <property type="term" value="P:glycyl-tRNA aminoacylation"/>
    <property type="evidence" value="ECO:0007669"/>
    <property type="project" value="UniProtKB-UniRule"/>
</dbReference>
<dbReference type="HAMAP" id="MF_00255">
    <property type="entry name" value="Gly_tRNA_synth_beta"/>
    <property type="match status" value="1"/>
</dbReference>
<dbReference type="InterPro" id="IPR008909">
    <property type="entry name" value="DALR_anticod-bd"/>
</dbReference>
<dbReference type="InterPro" id="IPR015944">
    <property type="entry name" value="Gly-tRNA-synth_bsu"/>
</dbReference>
<dbReference type="InterPro" id="IPR006194">
    <property type="entry name" value="Gly-tRNA-synth_heterodimer"/>
</dbReference>
<dbReference type="NCBIfam" id="TIGR00211">
    <property type="entry name" value="glyS"/>
    <property type="match status" value="1"/>
</dbReference>
<dbReference type="PANTHER" id="PTHR30075:SF2">
    <property type="entry name" value="GLYCINE--TRNA LIGASE, CHLOROPLASTIC_MITOCHONDRIAL 2"/>
    <property type="match status" value="1"/>
</dbReference>
<dbReference type="PANTHER" id="PTHR30075">
    <property type="entry name" value="GLYCYL-TRNA SYNTHETASE"/>
    <property type="match status" value="1"/>
</dbReference>
<dbReference type="Pfam" id="PF05746">
    <property type="entry name" value="DALR_1"/>
    <property type="match status" value="1"/>
</dbReference>
<dbReference type="Pfam" id="PF02092">
    <property type="entry name" value="tRNA_synt_2f"/>
    <property type="match status" value="1"/>
</dbReference>
<dbReference type="PRINTS" id="PR01045">
    <property type="entry name" value="TRNASYNTHGB"/>
</dbReference>
<dbReference type="SUPFAM" id="SSF109604">
    <property type="entry name" value="HD-domain/PDEase-like"/>
    <property type="match status" value="1"/>
</dbReference>
<dbReference type="PROSITE" id="PS50861">
    <property type="entry name" value="AA_TRNA_LIGASE_II_GLYAB"/>
    <property type="match status" value="1"/>
</dbReference>
<comment type="catalytic activity">
    <reaction evidence="1">
        <text>tRNA(Gly) + glycine + ATP = glycyl-tRNA(Gly) + AMP + diphosphate</text>
        <dbReference type="Rhea" id="RHEA:16013"/>
        <dbReference type="Rhea" id="RHEA-COMP:9664"/>
        <dbReference type="Rhea" id="RHEA-COMP:9683"/>
        <dbReference type="ChEBI" id="CHEBI:30616"/>
        <dbReference type="ChEBI" id="CHEBI:33019"/>
        <dbReference type="ChEBI" id="CHEBI:57305"/>
        <dbReference type="ChEBI" id="CHEBI:78442"/>
        <dbReference type="ChEBI" id="CHEBI:78522"/>
        <dbReference type="ChEBI" id="CHEBI:456215"/>
        <dbReference type="EC" id="6.1.1.14"/>
    </reaction>
</comment>
<comment type="subunit">
    <text evidence="1">Tetramer of two alpha and two beta subunits.</text>
</comment>
<comment type="subcellular location">
    <subcellularLocation>
        <location evidence="1">Cytoplasm</location>
    </subcellularLocation>
</comment>
<comment type="similarity">
    <text evidence="1">Belongs to the class-II aminoacyl-tRNA synthetase family.</text>
</comment>
<gene>
    <name evidence="1" type="primary">glyS</name>
    <name type="ordered locus">PP_0060</name>
</gene>
<name>SYGB_PSEPK</name>
<protein>
    <recommendedName>
        <fullName evidence="1">Glycine--tRNA ligase beta subunit</fullName>
        <ecNumber evidence="1">6.1.1.14</ecNumber>
    </recommendedName>
    <alternativeName>
        <fullName evidence="1">Glycyl-tRNA synthetase beta subunit</fullName>
        <shortName evidence="1">GlyRS</shortName>
    </alternativeName>
</protein>
<sequence length="684" mass="75113">MSAQDFLVELGTEELPPKALASLGDAFLAGIEKGLQAAGLNYTGKQVYAAPRRLAVLIRQLDVQQPDRSINIDGPPLQAAFNAEGEPTQAALGFAKKCGVELAEIDQSGPKLRFSQHIPGKATVGLLPTIVEDSLNDLPIPKRMRWAASREEFVRPTQWLVMLLGDQVVDCTILSQKAGRESRGHRFHHPENVLITTPANYVEDLRKAYVLADFAERRELISKRTAELAMQQEGTAIVPPALLDEVTALVEWPVPLVCSFEERFLEVPQEALITTMQDNQKYFCLLDSEGKLLPRFITVANVESRDPKQIVQGNEKVVRPRLTDAEFFFKQDKKQPLETFNERLKNVVFQAQLGTVYDKAERVSRLAAFIAPLIGGDAQRAGRAGLLSKCDLATEMVGEFPEMQGVAGYYYALNDGEPEDVALALNEQYMPRGAGAELPQTLTGAAVAIADKLDTLVGIFGIGMLPTGSKDPYALRRAALGVLRILIEKQLDLDLTGAVEFAVKQFGAKIKAPGLAEQVLEFIFDRLRARYEDEGIDVATYLSVRALQPGSALDFDQRVQAVQAFRKLPEAEALAAVNKRVSNLLSKAEGAIAEQVEPKYFDNANEFSLYSAIQQADQAVQPMAAARQYSESLARLAALRDPVDAFFEAVMVNAEDAKVRANRYALLSRLRGLFLGVADISLLG</sequence>
<reference key="1">
    <citation type="journal article" date="2002" name="Environ. Microbiol.">
        <title>Complete genome sequence and comparative analysis of the metabolically versatile Pseudomonas putida KT2440.</title>
        <authorList>
            <person name="Nelson K.E."/>
            <person name="Weinel C."/>
            <person name="Paulsen I.T."/>
            <person name="Dodson R.J."/>
            <person name="Hilbert H."/>
            <person name="Martins dos Santos V.A.P."/>
            <person name="Fouts D.E."/>
            <person name="Gill S.R."/>
            <person name="Pop M."/>
            <person name="Holmes M."/>
            <person name="Brinkac L.M."/>
            <person name="Beanan M.J."/>
            <person name="DeBoy R.T."/>
            <person name="Daugherty S.C."/>
            <person name="Kolonay J.F."/>
            <person name="Madupu R."/>
            <person name="Nelson W.C."/>
            <person name="White O."/>
            <person name="Peterson J.D."/>
            <person name="Khouri H.M."/>
            <person name="Hance I."/>
            <person name="Chris Lee P."/>
            <person name="Holtzapple E.K."/>
            <person name="Scanlan D."/>
            <person name="Tran K."/>
            <person name="Moazzez A."/>
            <person name="Utterback T.R."/>
            <person name="Rizzo M."/>
            <person name="Lee K."/>
            <person name="Kosack D."/>
            <person name="Moestl D."/>
            <person name="Wedler H."/>
            <person name="Lauber J."/>
            <person name="Stjepandic D."/>
            <person name="Hoheisel J."/>
            <person name="Straetz M."/>
            <person name="Heim S."/>
            <person name="Kiewitz C."/>
            <person name="Eisen J.A."/>
            <person name="Timmis K.N."/>
            <person name="Duesterhoeft A."/>
            <person name="Tuemmler B."/>
            <person name="Fraser C.M."/>
        </authorList>
    </citation>
    <scope>NUCLEOTIDE SEQUENCE [LARGE SCALE GENOMIC DNA]</scope>
    <source>
        <strain>ATCC 47054 / DSM 6125 / CFBP 8728 / NCIMB 11950 / KT2440</strain>
    </source>
</reference>
<organism>
    <name type="scientific">Pseudomonas putida (strain ATCC 47054 / DSM 6125 / CFBP 8728 / NCIMB 11950 / KT2440)</name>
    <dbReference type="NCBI Taxonomy" id="160488"/>
    <lineage>
        <taxon>Bacteria</taxon>
        <taxon>Pseudomonadati</taxon>
        <taxon>Pseudomonadota</taxon>
        <taxon>Gammaproteobacteria</taxon>
        <taxon>Pseudomonadales</taxon>
        <taxon>Pseudomonadaceae</taxon>
        <taxon>Pseudomonas</taxon>
    </lineage>
</organism>
<evidence type="ECO:0000255" key="1">
    <source>
        <dbReference type="HAMAP-Rule" id="MF_00255"/>
    </source>
</evidence>
<proteinExistence type="inferred from homology"/>
<keyword id="KW-0030">Aminoacyl-tRNA synthetase</keyword>
<keyword id="KW-0067">ATP-binding</keyword>
<keyword id="KW-0963">Cytoplasm</keyword>
<keyword id="KW-0436">Ligase</keyword>
<keyword id="KW-0547">Nucleotide-binding</keyword>
<keyword id="KW-0648">Protein biosynthesis</keyword>
<keyword id="KW-1185">Reference proteome</keyword>
<feature type="chain" id="PRO_0000072919" description="Glycine--tRNA ligase beta subunit">
    <location>
        <begin position="1"/>
        <end position="684"/>
    </location>
</feature>
<accession>Q88RR9</accession>